<reference key="1">
    <citation type="journal article" date="2001" name="Nature">
        <title>Complete genome sequence of Salmonella enterica serovar Typhimurium LT2.</title>
        <authorList>
            <person name="McClelland M."/>
            <person name="Sanderson K.E."/>
            <person name="Spieth J."/>
            <person name="Clifton S.W."/>
            <person name="Latreille P."/>
            <person name="Courtney L."/>
            <person name="Porwollik S."/>
            <person name="Ali J."/>
            <person name="Dante M."/>
            <person name="Du F."/>
            <person name="Hou S."/>
            <person name="Layman D."/>
            <person name="Leonard S."/>
            <person name="Nguyen C."/>
            <person name="Scott K."/>
            <person name="Holmes A."/>
            <person name="Grewal N."/>
            <person name="Mulvaney E."/>
            <person name="Ryan E."/>
            <person name="Sun H."/>
            <person name="Florea L."/>
            <person name="Miller W."/>
            <person name="Stoneking T."/>
            <person name="Nhan M."/>
            <person name="Waterston R."/>
            <person name="Wilson R.K."/>
        </authorList>
    </citation>
    <scope>NUCLEOTIDE SEQUENCE [LARGE SCALE GENOMIC DNA]</scope>
    <source>
        <strain>LT2 / SGSC1412 / ATCC 700720</strain>
    </source>
</reference>
<reference key="2">
    <citation type="journal article" date="1992" name="J. Biol. Chem.">
        <title>Mapping, cloning, expression, and sequencing of the rhaT gene, which encodes a novel L-rhamnose-H+ transport protein in Salmonella typhimurium and Escherichia coli.</title>
        <authorList>
            <person name="Tate C.G."/>
            <person name="Muiry J.A.R."/>
            <person name="Henderson P.J.F."/>
        </authorList>
    </citation>
    <scope>NUCLEOTIDE SEQUENCE [GENOMIC DNA] OF 1-138</scope>
    <source>
        <strain>C5</strain>
    </source>
</reference>
<sequence length="227" mass="26519">MDSVMRKSLFLLLPLVVTNAHAVYVDVRHEYLDDSKANYDRAYISHRFANGVGFAIEAISKSGGDDTNKAFNDLETQGNEYTISYQFKTGDVAWQPGFVLETGNGYSTYKPYFRATWTLNESWWVGARYRFEYVRRSSDIRDDDTINRMDVWAGYKWNNFDWTIEGIYKKADKYDLYDGGKDNYEYNFRTAYIIDQWSPFVEVGNVSVNSNSDERQTRFRVGIGYTF</sequence>
<gene>
    <name type="primary">yiiY</name>
    <name type="ordered locus">STM4051</name>
</gene>
<dbReference type="EMBL" id="AE006468">
    <property type="protein sequence ID" value="AAL22891.1"/>
    <property type="molecule type" value="Genomic_DNA"/>
</dbReference>
<dbReference type="EMBL" id="M85157">
    <property type="status" value="NOT_ANNOTATED_CDS"/>
    <property type="molecule type" value="Genomic_DNA"/>
</dbReference>
<dbReference type="RefSeq" id="NP_462932.3">
    <property type="nucleotide sequence ID" value="NC_003197.2"/>
</dbReference>
<dbReference type="RefSeq" id="WP_000378721.1">
    <property type="nucleotide sequence ID" value="NC_003197.2"/>
</dbReference>
<dbReference type="SMR" id="P0A1U8"/>
<dbReference type="STRING" id="99287.STM4051"/>
<dbReference type="PaxDb" id="99287-STM4051"/>
<dbReference type="GeneID" id="1255578"/>
<dbReference type="KEGG" id="stm:STM4051"/>
<dbReference type="HOGENOM" id="CLU_081853_0_0_6"/>
<dbReference type="OMA" id="LTPYIEY"/>
<dbReference type="PhylomeDB" id="P0A1U8"/>
<dbReference type="BioCyc" id="SENT99287:STM4051-MONOMER"/>
<dbReference type="Proteomes" id="UP000001014">
    <property type="component" value="Chromosome"/>
</dbReference>
<dbReference type="GO" id="GO:0009279">
    <property type="term" value="C:cell outer membrane"/>
    <property type="evidence" value="ECO:0000318"/>
    <property type="project" value="GO_Central"/>
</dbReference>
<dbReference type="GO" id="GO:0015288">
    <property type="term" value="F:porin activity"/>
    <property type="evidence" value="ECO:0000318"/>
    <property type="project" value="GO_Central"/>
</dbReference>
<dbReference type="GO" id="GO:0015772">
    <property type="term" value="P:oligosaccharide transport"/>
    <property type="evidence" value="ECO:0000318"/>
    <property type="project" value="GO_Central"/>
</dbReference>
<dbReference type="Gene3D" id="2.40.160.40">
    <property type="entry name" value="monomeric porin ompg"/>
    <property type="match status" value="1"/>
</dbReference>
<dbReference type="InterPro" id="IPR053713">
    <property type="entry name" value="Bact_OM_Channel_sf"/>
</dbReference>
<dbReference type="InterPro" id="IPR009331">
    <property type="entry name" value="Oligogalacturonate-sp_porin"/>
</dbReference>
<dbReference type="PANTHER" id="PTHR38105:SF5">
    <property type="entry name" value="OUTER MEMBRANE PROTEIN"/>
    <property type="match status" value="1"/>
</dbReference>
<dbReference type="PANTHER" id="PTHR38105">
    <property type="entry name" value="OUTER MEMBRANE PROTEIN-RELATED-RELATED"/>
    <property type="match status" value="1"/>
</dbReference>
<dbReference type="Pfam" id="PF06178">
    <property type="entry name" value="KdgM"/>
    <property type="match status" value="1"/>
</dbReference>
<dbReference type="SUPFAM" id="SSF56935">
    <property type="entry name" value="Porins"/>
    <property type="match status" value="1"/>
</dbReference>
<protein>
    <recommendedName>
        <fullName>Uncharacterized protein YiiY</fullName>
    </recommendedName>
</protein>
<organism>
    <name type="scientific">Salmonella typhimurium (strain LT2 / SGSC1412 / ATCC 700720)</name>
    <dbReference type="NCBI Taxonomy" id="99287"/>
    <lineage>
        <taxon>Bacteria</taxon>
        <taxon>Pseudomonadati</taxon>
        <taxon>Pseudomonadota</taxon>
        <taxon>Gammaproteobacteria</taxon>
        <taxon>Enterobacterales</taxon>
        <taxon>Enterobacteriaceae</taxon>
        <taxon>Salmonella</taxon>
    </lineage>
</organism>
<proteinExistence type="inferred from homology"/>
<feature type="signal peptide" evidence="1">
    <location>
        <begin position="1"/>
        <end position="22"/>
    </location>
</feature>
<feature type="chain" id="PRO_0000014232" description="Uncharacterized protein YiiY">
    <location>
        <begin position="23"/>
        <end position="227"/>
    </location>
</feature>
<feature type="sequence conflict" description="In Ref. 2." evidence="2" ref="2">
    <original>SS</original>
    <variation>FF</variation>
    <location>
        <begin position="137"/>
        <end position="138"/>
    </location>
</feature>
<accession>P0A1U8</accession>
<accession>P43022</accession>
<evidence type="ECO:0000255" key="1"/>
<evidence type="ECO:0000305" key="2"/>
<keyword id="KW-1185">Reference proteome</keyword>
<keyword id="KW-0732">Signal</keyword>
<name>YIIY_SALTY</name>